<sequence length="41" mass="4263">GMGIGINLPPCIKNGEYCNPWTGSIILGGACCGTCTDYECH</sequence>
<comment type="subcellular location">
    <subcellularLocation>
        <location evidence="1">Secreted</location>
    </subcellularLocation>
</comment>
<comment type="tissue specificity">
    <text>Expressed by the venom duct.</text>
</comment>
<comment type="domain">
    <text evidence="1">The presence of a 'disulfide through disulfide knot' structurally defines this protein as a knottin.</text>
</comment>
<comment type="domain">
    <text>The cysteine framework is VI/VII (C-C-CC-C-C).</text>
</comment>
<reference key="1">
    <citation type="journal article" date="2007" name="J. Exp. Zool. B Mol. Dev. Evol.">
        <title>Venomous auger snail Hastula (Impages) hectica (Linnaeus, 1758): molecular phylogeny, foregut anatomy and comparative toxinology.</title>
        <authorList>
            <person name="Imperial J.S."/>
            <person name="Kantor Y."/>
            <person name="Watkins M."/>
            <person name="Heralde F.M. III"/>
            <person name="Stevenson B."/>
            <person name="Chen P."/>
            <person name="Hansson K."/>
            <person name="Stenflo J."/>
            <person name="Ownby J.P."/>
            <person name="Bouchet P."/>
            <person name="Olivera B.M."/>
        </authorList>
    </citation>
    <scope>NUCLEOTIDE SEQUENCE [MRNA]</scope>
    <source>
        <tissue>Venom duct</tissue>
    </source>
</reference>
<protein>
    <recommendedName>
        <fullName>Augerpeptide hhe6.1</fullName>
    </recommendedName>
</protein>
<keyword id="KW-1015">Disulfide bond</keyword>
<keyword id="KW-0960">Knottin</keyword>
<keyword id="KW-0964">Secreted</keyword>
<keyword id="KW-0800">Toxin</keyword>
<dbReference type="SMR" id="P0CI16"/>
<dbReference type="GO" id="GO:0005576">
    <property type="term" value="C:extracellular region"/>
    <property type="evidence" value="ECO:0007669"/>
    <property type="project" value="UniProtKB-SubCell"/>
</dbReference>
<dbReference type="GO" id="GO:0090729">
    <property type="term" value="F:toxin activity"/>
    <property type="evidence" value="ECO:0007669"/>
    <property type="project" value="UniProtKB-KW"/>
</dbReference>
<feature type="chain" id="PRO_0000402140" description="Augerpeptide hhe6.1">
    <location>
        <begin position="1"/>
        <end position="41"/>
    </location>
</feature>
<feature type="disulfide bond" evidence="1">
    <location>
        <begin position="11"/>
        <end position="32"/>
    </location>
</feature>
<feature type="disulfide bond" evidence="1">
    <location>
        <begin position="18"/>
        <end position="35"/>
    </location>
</feature>
<feature type="disulfide bond" evidence="1">
    <location>
        <begin position="31"/>
        <end position="40"/>
    </location>
</feature>
<accession>P0CI16</accession>
<organism>
    <name type="scientific">Hastula hectica</name>
    <name type="common">Sea snail</name>
    <name type="synonym">Impages hectica</name>
    <dbReference type="NCBI Taxonomy" id="745793"/>
    <lineage>
        <taxon>Eukaryota</taxon>
        <taxon>Metazoa</taxon>
        <taxon>Spiralia</taxon>
        <taxon>Lophotrochozoa</taxon>
        <taxon>Mollusca</taxon>
        <taxon>Gastropoda</taxon>
        <taxon>Caenogastropoda</taxon>
        <taxon>Neogastropoda</taxon>
        <taxon>Conoidea</taxon>
        <taxon>Terebridae</taxon>
        <taxon>Hastula</taxon>
    </lineage>
</organism>
<proteinExistence type="evidence at transcript level"/>
<name>TE61_HASHE</name>
<evidence type="ECO:0000250" key="1"/>